<keyword id="KW-0002">3D-structure</keyword>
<keyword id="KW-0068">Autocatalytic cleavage</keyword>
<keyword id="KW-0106">Calcium</keyword>
<keyword id="KW-1003">Cell membrane</keyword>
<keyword id="KW-0217">Developmental protein</keyword>
<keyword id="KW-0225">Disease variant</keyword>
<keyword id="KW-0256">Endoplasmic reticulum</keyword>
<keyword id="KW-0333">Golgi apparatus</keyword>
<keyword id="KW-0378">Hydrolase</keyword>
<keyword id="KW-0449">Lipoprotein</keyword>
<keyword id="KW-0472">Membrane</keyword>
<keyword id="KW-0479">Metal-binding</keyword>
<keyword id="KW-0564">Palmitate</keyword>
<keyword id="KW-0645">Protease</keyword>
<keyword id="KW-1267">Proteomics identification</keyword>
<keyword id="KW-1185">Reference proteome</keyword>
<keyword id="KW-0964">Secreted</keyword>
<keyword id="KW-0732">Signal</keyword>
<keyword id="KW-0808">Transferase</keyword>
<keyword id="KW-0862">Zinc</keyword>
<proteinExistence type="evidence at protein level"/>
<organism>
    <name type="scientific">Homo sapiens</name>
    <name type="common">Human</name>
    <dbReference type="NCBI Taxonomy" id="9606"/>
    <lineage>
        <taxon>Eukaryota</taxon>
        <taxon>Metazoa</taxon>
        <taxon>Chordata</taxon>
        <taxon>Craniata</taxon>
        <taxon>Vertebrata</taxon>
        <taxon>Euteleostomi</taxon>
        <taxon>Mammalia</taxon>
        <taxon>Eutheria</taxon>
        <taxon>Euarchontoglires</taxon>
        <taxon>Primates</taxon>
        <taxon>Haplorrhini</taxon>
        <taxon>Catarrhini</taxon>
        <taxon>Hominidae</taxon>
        <taxon>Homo</taxon>
    </lineage>
</organism>
<evidence type="ECO:0000250" key="1">
    <source>
        <dbReference type="UniProtKB" id="Q02936"/>
    </source>
</evidence>
<evidence type="ECO:0000250" key="2">
    <source>
        <dbReference type="UniProtKB" id="Q15465"/>
    </source>
</evidence>
<evidence type="ECO:0000250" key="3">
    <source>
        <dbReference type="UniProtKB" id="Q61488"/>
    </source>
</evidence>
<evidence type="ECO:0000250" key="4">
    <source>
        <dbReference type="UniProtKB" id="Q62226"/>
    </source>
</evidence>
<evidence type="ECO:0000255" key="5"/>
<evidence type="ECO:0000269" key="6">
    <source>
    </source>
</evidence>
<evidence type="ECO:0000269" key="7">
    <source>
    </source>
</evidence>
<evidence type="ECO:0000269" key="8">
    <source>
    </source>
</evidence>
<evidence type="ECO:0000269" key="9">
    <source>
    </source>
</evidence>
<evidence type="ECO:0000269" key="10">
    <source>
    </source>
</evidence>
<evidence type="ECO:0000269" key="11">
    <source>
    </source>
</evidence>
<evidence type="ECO:0000269" key="12">
    <source>
    </source>
</evidence>
<evidence type="ECO:0000269" key="13">
    <source>
    </source>
</evidence>
<evidence type="ECO:0000269" key="14">
    <source>
    </source>
</evidence>
<evidence type="ECO:0000303" key="15">
    <source>
    </source>
</evidence>
<evidence type="ECO:0000305" key="16"/>
<evidence type="ECO:0000312" key="17">
    <source>
        <dbReference type="HGNC" id="HGNC:2865"/>
    </source>
</evidence>
<evidence type="ECO:0007744" key="18">
    <source>
        <dbReference type="PDB" id="2WFQ"/>
    </source>
</evidence>
<evidence type="ECO:0007744" key="19">
    <source>
        <dbReference type="PDB" id="2WFR"/>
    </source>
</evidence>
<evidence type="ECO:0007744" key="20">
    <source>
        <dbReference type="PDB" id="2WG3"/>
    </source>
</evidence>
<evidence type="ECO:0007744" key="21">
    <source>
        <dbReference type="PDB" id="3N1G"/>
    </source>
</evidence>
<evidence type="ECO:0007744" key="22">
    <source>
        <dbReference type="PDB" id="3N1Q"/>
    </source>
</evidence>
<evidence type="ECO:0007829" key="23">
    <source>
        <dbReference type="PDB" id="2WFQ"/>
    </source>
</evidence>
<gene>
    <name evidence="17" type="primary">DHH</name>
</gene>
<reference key="1">
    <citation type="journal article" date="2000" name="J. Biochem. Mol. Biol. Biophys.">
        <title>Expression of Sonic hedgehog and its receptor Patched/Smoothened in human cancer cell lines and embryonic organs.</title>
        <authorList>
            <person name="Tate G."/>
            <person name="Kishimoto K."/>
            <person name="Mitsuya T."/>
        </authorList>
    </citation>
    <scope>NUCLEOTIDE SEQUENCE [GENOMIC DNA]</scope>
</reference>
<reference key="2">
    <citation type="journal article" date="2004" name="Genome Res.">
        <title>The status, quality, and expansion of the NIH full-length cDNA project: the Mammalian Gene Collection (MGC).</title>
        <authorList>
            <consortium name="The MGC Project Team"/>
        </authorList>
    </citation>
    <scope>NUCLEOTIDE SEQUENCE [LARGE SCALE MRNA]</scope>
    <source>
        <tissue>Brain</tissue>
    </source>
</reference>
<reference key="3">
    <citation type="submission" date="1996-07" db="EMBL/GenBank/DDBJ databases">
        <title>Human desert hedgehog.</title>
        <authorList>
            <person name="Drummond I.A."/>
        </authorList>
    </citation>
    <scope>NUCLEOTIDE SEQUENCE [MRNA] OF 85-178</scope>
    <source>
        <tissue>Kidney</tissue>
    </source>
</reference>
<reference key="4">
    <citation type="journal article" date="2000" name="Am. J. Hum. Genet.">
        <title>A novel mutation of desert hedgehog in a patient with 46,XY partial gonadal dysgenesis accompanied by minifascicular neuropathy.</title>
        <authorList>
            <person name="Umehara F."/>
            <person name="Tate G."/>
            <person name="Itoh K."/>
            <person name="Yamaguchi N."/>
            <person name="Douchi T."/>
            <person name="Mitsuya T."/>
            <person name="Osame M."/>
        </authorList>
    </citation>
    <scope>INVOLVEMENT IN GDMN</scope>
</reference>
<reference key="5">
    <citation type="journal article" date="2001" name="Mech. Dev.">
        <title>Comparative biological responses to human Sonic, Indian, and Desert hedgehog.</title>
        <authorList>
            <person name="Pathi S."/>
            <person name="Pagan-Westphal S."/>
            <person name="Baker D.P."/>
            <person name="Garber E.A."/>
            <person name="Rayhorn P."/>
            <person name="Bumcrot D."/>
            <person name="Tabin C.J."/>
            <person name="Blake Pepinsky R."/>
            <person name="Williams K.P."/>
        </authorList>
    </citation>
    <scope>FUNCTION</scope>
</reference>
<reference key="6">
    <citation type="journal article" date="2014" name="Mech. Dev.">
        <title>A new role for Hedgehogs in juxtacrine signaling.</title>
        <authorList>
            <person name="Pettigrew C.A."/>
            <person name="Asp E."/>
            <person name="Emerson C.P. Jr."/>
        </authorList>
    </citation>
    <scope>FUNCTION</scope>
    <scope>DOMAIN</scope>
    <scope>PROTEOLYTIC CLEAVAGE</scope>
</reference>
<reference key="7">
    <citation type="journal article" date="2014" name="PLoS Genet.">
        <title>Loss of function mutation in the palmitoyl-transferase HHAT leads to syndromic 46,XY disorder of sex development by impeding Hedgehog protein palmitoylation and signaling.</title>
        <authorList>
            <person name="Callier P."/>
            <person name="Calvel P."/>
            <person name="Matevossian A."/>
            <person name="Makrythanasis P."/>
            <person name="Bernard P."/>
            <person name="Kurosaka H."/>
            <person name="Vannier A."/>
            <person name="Thauvin-Robinet C."/>
            <person name="Borel C."/>
            <person name="Mazaud-Guittot S."/>
            <person name="Rolland A."/>
            <person name="Desdoits-Lethimonier C."/>
            <person name="Guipponi M."/>
            <person name="Zimmermann C."/>
            <person name="Stevant I."/>
            <person name="Kuhne F."/>
            <person name="Conne B."/>
            <person name="Santoni F."/>
            <person name="Lambert S."/>
            <person name="Huet F."/>
            <person name="Mugneret F."/>
            <person name="Jaruzelska J."/>
            <person name="Faivre L."/>
            <person name="Wilhelm D."/>
            <person name="Jegou B."/>
            <person name="Trainor P.A."/>
            <person name="Resh M.D."/>
            <person name="Antonarakis S.E."/>
            <person name="Nef S."/>
        </authorList>
    </citation>
    <scope>PALMITOYLATION AT CYS-23</scope>
    <scope>MUTAGENESIS OF CYS-23</scope>
</reference>
<reference key="8">
    <citation type="journal article" date="2009" name="Nat. Struct. Mol. Biol.">
        <title>Structural insights into hedgehog ligand sequestration by the human hedgehog-interacting protein HHIP.</title>
        <authorList>
            <person name="Bishop B."/>
            <person name="Aricescu A.R."/>
            <person name="Harlos K."/>
            <person name="O'Callaghan C.A."/>
            <person name="Jones E.Y."/>
            <person name="Siebold C."/>
        </authorList>
    </citation>
    <scope>X-RAY CRYSTALLOGRAPHY (1.85 ANGSTROMS) OF 39-194 IN COMPLEX WITH HHIP AND ZINC IONS</scope>
    <scope>CALCIUM-BINDING</scope>
    <scope>DOMAIN</scope>
    <scope>INTERACTION WITH HHIP</scope>
</reference>
<reference key="9">
    <citation type="journal article" date="2010" name="J. Biol. Chem.">
        <title>All mammalian Hedgehog proteins interact with cell adhesion molecule, down-regulated by oncogenes (CDO) and brother of CDO (BOC) in a conserved manner.</title>
        <authorList>
            <person name="Kavran J.M."/>
            <person name="Ward M.D."/>
            <person name="Oladosu O.O."/>
            <person name="Mulepati S."/>
            <person name="Leahy D.J."/>
        </authorList>
    </citation>
    <scope>X-RAY CRYSTALLOGRAPHY (1.9 ANGSTROMS) OF 24-189 IN COMPLEXES WITH BOC; CDON; ZINC AND CALCIUM IONS</scope>
    <scope>DOMAIN</scope>
    <scope>INTERACTION WITH BOC AND CDON</scope>
</reference>
<reference key="10">
    <citation type="journal article" date="2004" name="J. Clin. Endocrinol. Metab.">
        <title>Mutations in the desert hedgehog (DHH) gene in patients with 46,XY complete pure gonadal dysgenesis.</title>
        <authorList>
            <person name="Canto P."/>
            <person name="Soederlund D."/>
            <person name="Reyes E."/>
            <person name="Mendez J.P."/>
        </authorList>
    </citation>
    <scope>VARIANT SRXY7 PRO-162</scope>
</reference>
<reference key="11">
    <citation type="journal article" date="2004" name="J. Clin. Endocrinol. Metab.">
        <authorList>
            <person name="Canto P."/>
            <person name="Soederlund D."/>
            <person name="Reyes E."/>
            <person name="Mendez J.P."/>
        </authorList>
    </citation>
    <scope>ERRATUM OF PUBMED:15356051</scope>
</reference>
<reference key="12">
    <citation type="journal article" date="2018" name="Hum. Mutat.">
        <title>In vitro functional characterization of the novel DHH mutations p.(Asn337Lysfs*24) and p.(Glu212Lys) associated with gonadal dysgenesis.</title>
        <authorList>
            <person name="Tajouri A."/>
            <person name="Kharrat M."/>
            <person name="Hizem S."/>
            <person name="Zaghdoudi H."/>
            <person name="M'rad R."/>
            <person name="Simic-Schleicher G."/>
            <person name="Kaiser F.J."/>
            <person name="Hiort O."/>
            <person name="Werner R."/>
        </authorList>
    </citation>
    <scope>VARIANTS GDMN 176-TYR--GLY-396 DEL AND LYS-212</scope>
    <scope>CHARACTERIZATION OF VARIANT GDMN LYS-212</scope>
    <scope>PTM</scope>
</reference>
<reference key="13">
    <citation type="journal article" date="2021" name="Cardiovasc. Res.">
        <title>Full-length Dhh and N-terminal Shh act as competitive antagonists to regulate angiogenesis and vascular permeability.</title>
        <authorList>
            <person name="Hollier P.L."/>
            <person name="Chapouly C."/>
            <person name="Diop A."/>
            <person name="Guimbal S."/>
            <person name="Cornuault L."/>
            <person name="Gadeau A.P."/>
            <person name="Renault M.A."/>
        </authorList>
    </citation>
    <scope>FUNCTION</scope>
    <scope>SUBCELLULAR LOCATION</scope>
</reference>
<name>DHH_HUMAN</name>
<comment type="function">
    <molecule>Desert hedgehog protein</molecule>
    <text evidence="3 4 11 14">The C-terminal part of the desert hedgehog protein precursor displays an autoproteolysis and a cholesterol transferase activity (By similarity). Both activities result in the cleavage of the full-length protein into two parts (N-product and C-product) followed by the covalent attachment of a cholesterol moiety to the C-terminal of the newly generated N-product (By similarity). Both activities occur in the endoplasmic reticulum (By similarity). Functions in cell-cell mediated juxtacrine signaling (PubMed:24342078). Promotes endothelium integrity (PubMed:33063110). Binds to PTCH1 receptor, which functions in association with smoothened (SMO), to activate the transcription of target genes in endothelial cells (PubMed:33063110). In Schwann cells, controls the development of the peripheral nerve sheath and the transition of mesenchymal cells to form the epithelium-like structure of the perineurial tube (By similarity).</text>
</comment>
<comment type="function">
    <molecule>Desert hedgehog protein N-product</molecule>
    <text evidence="2 3 4 7 14">The dually lipidated desert hedgehog protein N-product is essential for a variety of patterning events during development (By similarity). Binds to the patched (PTCH1) receptor, which functions in association with smoothened (SMO), to activate the transcription of target genes (PubMed:11472839, PubMed:33063110). Required for normal testis development and spermatogenesis, namely for the formation of adult-type Leydig cells and normal development of peritubular cells and seminiferous tubules (By similarity). Activates primary cilia signaling on neighboring valve interstitial cells through a paracrine mechanism (By similarity). May induce motor neurons in lateral neural tube and may have a polarizing activity (PubMed:11472839). Prevents the desert hedgehog protein precursor binding to PTCH1 (PubMed:33063110).</text>
</comment>
<comment type="catalytic activity">
    <molecule>Desert hedgehog protein</molecule>
    <reaction evidence="4">
        <text>glycyl-L-cysteinyl-[protein] + cholesterol + H(+) = [protein]-C-terminal glycyl cholesterol ester + N-terminal L-cysteinyl-[protein]</text>
        <dbReference type="Rhea" id="RHEA:59504"/>
        <dbReference type="Rhea" id="RHEA-COMP:12707"/>
        <dbReference type="Rhea" id="RHEA-COMP:15369"/>
        <dbReference type="Rhea" id="RHEA-COMP:15374"/>
        <dbReference type="ChEBI" id="CHEBI:15378"/>
        <dbReference type="ChEBI" id="CHEBI:16113"/>
        <dbReference type="ChEBI" id="CHEBI:65250"/>
        <dbReference type="ChEBI" id="CHEBI:143135"/>
        <dbReference type="ChEBI" id="CHEBI:143140"/>
    </reaction>
    <physiologicalReaction direction="left-to-right" evidence="4">
        <dbReference type="Rhea" id="RHEA:59505"/>
    </physiologicalReaction>
</comment>
<comment type="subunit">
    <molecule>Desert hedgehog protein N-product</molecule>
    <text evidence="2">Multimer.</text>
</comment>
<comment type="subunit">
    <text evidence="9 10">Interacts with BOC and CDON (PubMed:20519495). Interacts with HHIP (PubMed:19561611).</text>
</comment>
<comment type="interaction">
    <interactant intactId="EBI-11667804">
        <id>O43323</id>
    </interactant>
    <interactant intactId="EBI-718555">
        <id>Q9BWV1</id>
        <label>BOC</label>
    </interactant>
    <organismsDiffer>false</organismsDiffer>
    <experiments>2</experiments>
</comment>
<comment type="interaction">
    <interactant intactId="EBI-11667804">
        <id>O43323</id>
    </interactant>
    <interactant intactId="EBI-7016840">
        <id>Q4KMG0</id>
        <label>CDON</label>
    </interactant>
    <organismsDiffer>false</organismsDiffer>
    <experiments>2</experiments>
</comment>
<comment type="interaction">
    <interactant intactId="EBI-11667804">
        <id>O43323</id>
    </interactant>
    <interactant intactId="EBI-15791478">
        <id>Q96QV1-1</id>
        <label>HHIP</label>
    </interactant>
    <organismsDiffer>false</organismsDiffer>
    <experiments>4</experiments>
</comment>
<comment type="subcellular location">
    <molecule>Desert hedgehog protein N-product</molecule>
    <subcellularLocation>
        <location evidence="4">Cell membrane</location>
        <topology evidence="4">Lipid-anchor</topology>
    </subcellularLocation>
</comment>
<comment type="subcellular location">
    <molecule>Desert hedgehog protein</molecule>
    <subcellularLocation>
        <location evidence="2">Endoplasmic reticulum membrane</location>
    </subcellularLocation>
    <subcellularLocation>
        <location evidence="2">Golgi apparatus membrane</location>
    </subcellularLocation>
    <subcellularLocation>
        <location evidence="14">Secreted</location>
    </subcellularLocation>
    <subcellularLocation>
        <location evidence="11">Cell membrane</location>
    </subcellularLocation>
    <text evidence="2">Co-localizes with HHAT in the ER and Golgi membrane.</text>
</comment>
<comment type="domain">
    <molecule>Desert hedgehog protein N-product</molecule>
    <text evidence="9 10">Binds calcium and zinc ions; this stabilizes the protein fold and is essential for protein-protein interactions mediated by this domain.</text>
</comment>
<comment type="domain">
    <molecule>Desert hedgehog protein</molecule>
    <text evidence="11">The C-terminal domain regulates the auto-processing and controls the juxtacrine signaling.</text>
</comment>
<comment type="PTM">
    <molecule>Desert hedgehog protein</molecule>
    <text evidence="2 4 11 13">Partially autoproteolyzed (PubMed:24342078, PubMed:30298535). The C-terminal domain displays an autoproteolysis activity and a cholesterol transferase activity (By similarity). Both activities result in the cleavage of the full-length protein and covalent attachment of a cholesterol moiety to the C-terminal of the newly generated N-terminal fragment (DhhN) (By similarity).</text>
</comment>
<comment type="PTM">
    <molecule>Desert hedgehog protein N-product</molecule>
    <text evidence="4">N-palmitoylation by HHAT of DhhN is required for desert hedgehog protein N-product multimerization and full activity (By similarity).</text>
</comment>
<comment type="disease" evidence="6 13">
    <disease id="DI-02146">
        <name>46,XY gonadal dysgenesis with minifascicular neuropathy</name>
        <acronym>GDMN</acronym>
        <description>An autosomal recessive disorder characterized by gonadal dysgenesis associated with polyneuropathy. Genital anomalies include the presence of a testis on one side and a streak or an absent gonad at the other, persistence of Muellerian duct structures, and a variable degree of genital ambiguity.</description>
        <dbReference type="MIM" id="607080"/>
    </disease>
    <text>The disease may be caused by variants affecting the gene represented in this entry.</text>
</comment>
<comment type="disease" evidence="8">
    <disease id="DI-01379">
        <name>46,XY sex reversal 7</name>
        <acronym>SRXY7</acronym>
        <description>A disorder of sex development. Affected individuals have a 46,XY karyotype but present as phenotypically normal females. SRXY7 patients have no functional gonads.</description>
        <dbReference type="MIM" id="233420"/>
    </disease>
    <text>The disease may be caused by variants affecting the gene represented in this entry.</text>
</comment>
<comment type="similarity">
    <text evidence="16">Belongs to the hedgehog family.</text>
</comment>
<dbReference type="EC" id="3.1.-.-" evidence="4"/>
<dbReference type="EMBL" id="AB010994">
    <property type="protein sequence ID" value="BAA24866.1"/>
    <property type="molecule type" value="Genomic_DNA"/>
</dbReference>
<dbReference type="EMBL" id="BC033507">
    <property type="protein sequence ID" value="AAH33507.1"/>
    <property type="molecule type" value="mRNA"/>
</dbReference>
<dbReference type="EMBL" id="U59748">
    <property type="protein sequence ID" value="AAB03398.1"/>
    <property type="molecule type" value="mRNA"/>
</dbReference>
<dbReference type="CCDS" id="CCDS8779.1"/>
<dbReference type="PIR" id="G02735">
    <property type="entry name" value="G02735"/>
</dbReference>
<dbReference type="RefSeq" id="NP_066382.1">
    <property type="nucleotide sequence ID" value="NM_021044.4"/>
</dbReference>
<dbReference type="PDB" id="2WFQ">
    <property type="method" value="X-ray"/>
    <property type="resolution" value="1.85 A"/>
    <property type="chains" value="A=39-194"/>
</dbReference>
<dbReference type="PDB" id="2WFR">
    <property type="method" value="X-ray"/>
    <property type="resolution" value="1.95 A"/>
    <property type="chains" value="A=39-194"/>
</dbReference>
<dbReference type="PDB" id="2WG3">
    <property type="method" value="X-ray"/>
    <property type="resolution" value="2.60 A"/>
    <property type="chains" value="A/B=40-194"/>
</dbReference>
<dbReference type="PDB" id="3N1G">
    <property type="method" value="X-ray"/>
    <property type="resolution" value="1.90 A"/>
    <property type="chains" value="A/B=24-189"/>
</dbReference>
<dbReference type="PDB" id="3N1Q">
    <property type="method" value="X-ray"/>
    <property type="resolution" value="2.89 A"/>
    <property type="chains" value="A/B/E=24-189"/>
</dbReference>
<dbReference type="PDBsum" id="2WFQ"/>
<dbReference type="PDBsum" id="2WFR"/>
<dbReference type="PDBsum" id="2WG3"/>
<dbReference type="PDBsum" id="3N1G"/>
<dbReference type="PDBsum" id="3N1Q"/>
<dbReference type="SMR" id="O43323"/>
<dbReference type="BioGRID" id="119151">
    <property type="interactions" value="52"/>
</dbReference>
<dbReference type="DIP" id="DIP-48538N"/>
<dbReference type="FunCoup" id="O43323">
    <property type="interactions" value="133"/>
</dbReference>
<dbReference type="IntAct" id="O43323">
    <property type="interactions" value="43"/>
</dbReference>
<dbReference type="STRING" id="9606.ENSP00000497483"/>
<dbReference type="MEROPS" id="C46.004"/>
<dbReference type="GlyGen" id="O43323">
    <property type="glycosylation" value="1 site"/>
</dbReference>
<dbReference type="iPTMnet" id="O43323"/>
<dbReference type="PhosphoSitePlus" id="O43323"/>
<dbReference type="BioMuta" id="DHH"/>
<dbReference type="MassIVE" id="O43323"/>
<dbReference type="PaxDb" id="9606-ENSP00000266991"/>
<dbReference type="PeptideAtlas" id="O43323"/>
<dbReference type="ProteomicsDB" id="48903"/>
<dbReference type="Antibodypedia" id="25833">
    <property type="antibodies" value="404 antibodies from 29 providers"/>
</dbReference>
<dbReference type="DNASU" id="50846"/>
<dbReference type="Ensembl" id="ENST00000649637.2">
    <property type="protein sequence ID" value="ENSP00000497483.1"/>
    <property type="gene ID" value="ENSG00000139549.4"/>
</dbReference>
<dbReference type="GeneID" id="50846"/>
<dbReference type="KEGG" id="hsa:50846"/>
<dbReference type="MANE-Select" id="ENST00000649637.2">
    <property type="protein sequence ID" value="ENSP00000497483.1"/>
    <property type="RefSeq nucleotide sequence ID" value="NM_021044.4"/>
    <property type="RefSeq protein sequence ID" value="NP_066382.1"/>
</dbReference>
<dbReference type="UCSC" id="uc001rtf.4">
    <property type="organism name" value="human"/>
</dbReference>
<dbReference type="AGR" id="HGNC:2865"/>
<dbReference type="CTD" id="50846"/>
<dbReference type="DisGeNET" id="50846"/>
<dbReference type="GeneCards" id="DHH"/>
<dbReference type="GeneReviews" id="DHH"/>
<dbReference type="HGNC" id="HGNC:2865">
    <property type="gene designation" value="DHH"/>
</dbReference>
<dbReference type="HPA" id="ENSG00000139549">
    <property type="expression patterns" value="Tissue enriched (testis)"/>
</dbReference>
<dbReference type="MalaCards" id="DHH"/>
<dbReference type="MIM" id="233420">
    <property type="type" value="phenotype"/>
</dbReference>
<dbReference type="MIM" id="605423">
    <property type="type" value="gene"/>
</dbReference>
<dbReference type="MIM" id="607080">
    <property type="type" value="phenotype"/>
</dbReference>
<dbReference type="neXtProt" id="NX_O43323"/>
<dbReference type="OpenTargets" id="ENSG00000139549"/>
<dbReference type="Orphanet" id="242">
    <property type="disease" value="46,XY complete gonadal dysgenesis"/>
</dbReference>
<dbReference type="Orphanet" id="168563">
    <property type="disease" value="46,XY gonadal dysgenesis-motor and sensory neuropathy syndrome"/>
</dbReference>
<dbReference type="PharmGKB" id="PA27326"/>
<dbReference type="VEuPathDB" id="HostDB:ENSG00000139549"/>
<dbReference type="eggNOG" id="KOG3638">
    <property type="taxonomic scope" value="Eukaryota"/>
</dbReference>
<dbReference type="GeneTree" id="ENSGT00940000161132"/>
<dbReference type="HOGENOM" id="CLU_034686_0_0_1"/>
<dbReference type="InParanoid" id="O43323"/>
<dbReference type="OMA" id="NSMAIRA"/>
<dbReference type="OrthoDB" id="5212at2759"/>
<dbReference type="PAN-GO" id="O43323">
    <property type="GO annotations" value="6 GO annotations based on evolutionary models"/>
</dbReference>
<dbReference type="PhylomeDB" id="O43323"/>
<dbReference type="TreeFam" id="TF106458"/>
<dbReference type="PathwayCommons" id="O43323"/>
<dbReference type="Reactome" id="R-HSA-373080">
    <property type="pathway name" value="Class B/2 (Secretin family receptors)"/>
</dbReference>
<dbReference type="Reactome" id="R-HSA-5358346">
    <property type="pathway name" value="Hedgehog ligand biogenesis"/>
</dbReference>
<dbReference type="Reactome" id="R-HSA-5362798">
    <property type="pathway name" value="Release of Hh-Np from the secreting cell"/>
</dbReference>
<dbReference type="Reactome" id="R-HSA-5632681">
    <property type="pathway name" value="Ligand-receptor interactions"/>
</dbReference>
<dbReference type="Reactome" id="R-HSA-5632684">
    <property type="pathway name" value="Hedgehog 'on' state"/>
</dbReference>
<dbReference type="Reactome" id="R-HSA-5635838">
    <property type="pathway name" value="Activation of SMO"/>
</dbReference>
<dbReference type="Reactome" id="R-HSA-5658034">
    <property type="pathway name" value="HHAT G278V doesn't palmitoylate Hh-Np"/>
</dbReference>
<dbReference type="Reactome" id="R-HSA-9690406">
    <property type="pathway name" value="Transcriptional regulation of testis differentiation"/>
</dbReference>
<dbReference type="SignaLink" id="O43323"/>
<dbReference type="BioGRID-ORCS" id="50846">
    <property type="hits" value="14 hits in 1155 CRISPR screens"/>
</dbReference>
<dbReference type="EvolutionaryTrace" id="O43323"/>
<dbReference type="GeneWiki" id="Desert_hedgehog_protein"/>
<dbReference type="GenomeRNAi" id="50846"/>
<dbReference type="Pharos" id="O43323">
    <property type="development level" value="Tbio"/>
</dbReference>
<dbReference type="PRO" id="PR:O43323"/>
<dbReference type="Proteomes" id="UP000005640">
    <property type="component" value="Chromosome 12"/>
</dbReference>
<dbReference type="RNAct" id="O43323">
    <property type="molecule type" value="protein"/>
</dbReference>
<dbReference type="Bgee" id="ENSG00000139549">
    <property type="expression patterns" value="Expressed in tibial nerve and 79 other cell types or tissues"/>
</dbReference>
<dbReference type="GO" id="GO:0005789">
    <property type="term" value="C:endoplasmic reticulum membrane"/>
    <property type="evidence" value="ECO:0007669"/>
    <property type="project" value="UniProtKB-SubCell"/>
</dbReference>
<dbReference type="GO" id="GO:0005615">
    <property type="term" value="C:extracellular space"/>
    <property type="evidence" value="ECO:0000318"/>
    <property type="project" value="GO_Central"/>
</dbReference>
<dbReference type="GO" id="GO:0000139">
    <property type="term" value="C:Golgi membrane"/>
    <property type="evidence" value="ECO:0007669"/>
    <property type="project" value="UniProtKB-SubCell"/>
</dbReference>
<dbReference type="GO" id="GO:0005886">
    <property type="term" value="C:plasma membrane"/>
    <property type="evidence" value="ECO:0007669"/>
    <property type="project" value="UniProtKB-SubCell"/>
</dbReference>
<dbReference type="GO" id="GO:0005509">
    <property type="term" value="F:calcium ion binding"/>
    <property type="evidence" value="ECO:0000314"/>
    <property type="project" value="UniProtKB"/>
</dbReference>
<dbReference type="GO" id="GO:0140853">
    <property type="term" value="F:cholesterol-protein transferase activity"/>
    <property type="evidence" value="ECO:0000250"/>
    <property type="project" value="UniProtKB"/>
</dbReference>
<dbReference type="GO" id="GO:0005113">
    <property type="term" value="F:patched binding"/>
    <property type="evidence" value="ECO:0000314"/>
    <property type="project" value="UniProtKB"/>
</dbReference>
<dbReference type="GO" id="GO:0008233">
    <property type="term" value="F:peptidase activity"/>
    <property type="evidence" value="ECO:0000250"/>
    <property type="project" value="UniProtKB"/>
</dbReference>
<dbReference type="GO" id="GO:0008270">
    <property type="term" value="F:zinc ion binding"/>
    <property type="evidence" value="ECO:0000314"/>
    <property type="project" value="UniProtKB"/>
</dbReference>
<dbReference type="GO" id="GO:0001708">
    <property type="term" value="P:cell fate specification"/>
    <property type="evidence" value="ECO:0000318"/>
    <property type="project" value="GO_Central"/>
</dbReference>
<dbReference type="GO" id="GO:0007267">
    <property type="term" value="P:cell-cell signaling"/>
    <property type="evidence" value="ECO:0007669"/>
    <property type="project" value="InterPro"/>
</dbReference>
<dbReference type="GO" id="GO:0033327">
    <property type="term" value="P:Leydig cell differentiation"/>
    <property type="evidence" value="ECO:0007669"/>
    <property type="project" value="Ensembl"/>
</dbReference>
<dbReference type="GO" id="GO:0030238">
    <property type="term" value="P:male sex determination"/>
    <property type="evidence" value="ECO:0007669"/>
    <property type="project" value="Ensembl"/>
</dbReference>
<dbReference type="GO" id="GO:0042552">
    <property type="term" value="P:myelination"/>
    <property type="evidence" value="ECO:0007669"/>
    <property type="project" value="Ensembl"/>
</dbReference>
<dbReference type="GO" id="GO:0001649">
    <property type="term" value="P:osteoblast differentiation"/>
    <property type="evidence" value="ECO:0007669"/>
    <property type="project" value="Ensembl"/>
</dbReference>
<dbReference type="GO" id="GO:0045880">
    <property type="term" value="P:positive regulation of smoothened signaling pathway"/>
    <property type="evidence" value="ECO:0000314"/>
    <property type="project" value="UniProtKB"/>
</dbReference>
<dbReference type="GO" id="GO:0016540">
    <property type="term" value="P:protein autoprocessing"/>
    <property type="evidence" value="ECO:0007669"/>
    <property type="project" value="InterPro"/>
</dbReference>
<dbReference type="GO" id="GO:0010468">
    <property type="term" value="P:regulation of gene expression"/>
    <property type="evidence" value="ECO:0000318"/>
    <property type="project" value="GO_Central"/>
</dbReference>
<dbReference type="GO" id="GO:0050810">
    <property type="term" value="P:regulation of steroid biosynthetic process"/>
    <property type="evidence" value="ECO:0007669"/>
    <property type="project" value="Ensembl"/>
</dbReference>
<dbReference type="GO" id="GO:0032355">
    <property type="term" value="P:response to estradiol"/>
    <property type="evidence" value="ECO:0007669"/>
    <property type="project" value="Ensembl"/>
</dbReference>
<dbReference type="GO" id="GO:0043627">
    <property type="term" value="P:response to estrogen"/>
    <property type="evidence" value="ECO:0007669"/>
    <property type="project" value="Ensembl"/>
</dbReference>
<dbReference type="GO" id="GO:0097264">
    <property type="term" value="P:self proteolysis"/>
    <property type="evidence" value="ECO:0000250"/>
    <property type="project" value="UniProtKB"/>
</dbReference>
<dbReference type="GO" id="GO:0007224">
    <property type="term" value="P:smoothened signaling pathway"/>
    <property type="evidence" value="ECO:0000318"/>
    <property type="project" value="GO_Central"/>
</dbReference>
<dbReference type="GO" id="GO:0007286">
    <property type="term" value="P:spermatid development"/>
    <property type="evidence" value="ECO:0007669"/>
    <property type="project" value="Ensembl"/>
</dbReference>
<dbReference type="CDD" id="cd00081">
    <property type="entry name" value="Hint"/>
    <property type="match status" value="1"/>
</dbReference>
<dbReference type="FunFam" id="2.170.16.10:FF:000002">
    <property type="entry name" value="Desert hedgehog"/>
    <property type="match status" value="1"/>
</dbReference>
<dbReference type="FunFam" id="3.30.1380.10:FF:000001">
    <property type="entry name" value="Indian hedgehog"/>
    <property type="match status" value="1"/>
</dbReference>
<dbReference type="Gene3D" id="3.30.1380.10">
    <property type="match status" value="1"/>
</dbReference>
<dbReference type="Gene3D" id="2.170.16.10">
    <property type="entry name" value="Hedgehog/Intein (Hint) domain"/>
    <property type="match status" value="1"/>
</dbReference>
<dbReference type="InterPro" id="IPR001657">
    <property type="entry name" value="Hedgehog"/>
</dbReference>
<dbReference type="InterPro" id="IPR001767">
    <property type="entry name" value="Hedgehog_Hint"/>
</dbReference>
<dbReference type="InterPro" id="IPR009045">
    <property type="entry name" value="Hedgehog_sig/DD-Pept_Zn-bd_sf"/>
</dbReference>
<dbReference type="InterPro" id="IPR050387">
    <property type="entry name" value="Hedgehog_Signaling"/>
</dbReference>
<dbReference type="InterPro" id="IPR000320">
    <property type="entry name" value="Hedgehog_signalling_dom"/>
</dbReference>
<dbReference type="InterPro" id="IPR003586">
    <property type="entry name" value="Hint_dom_C"/>
</dbReference>
<dbReference type="InterPro" id="IPR003587">
    <property type="entry name" value="Hint_dom_N"/>
</dbReference>
<dbReference type="InterPro" id="IPR036844">
    <property type="entry name" value="Hint_dom_sf"/>
</dbReference>
<dbReference type="PANTHER" id="PTHR11889:SF56">
    <property type="entry name" value="DESERT HEDGEHOG PROTEIN"/>
    <property type="match status" value="1"/>
</dbReference>
<dbReference type="PANTHER" id="PTHR11889">
    <property type="entry name" value="HEDGEHOG"/>
    <property type="match status" value="1"/>
</dbReference>
<dbReference type="Pfam" id="PF01085">
    <property type="entry name" value="HH_signal"/>
    <property type="match status" value="1"/>
</dbReference>
<dbReference type="Pfam" id="PF01079">
    <property type="entry name" value="Hint"/>
    <property type="match status" value="1"/>
</dbReference>
<dbReference type="PIRSF" id="PIRSF009400">
    <property type="entry name" value="Peptidase_C46"/>
    <property type="match status" value="1"/>
</dbReference>
<dbReference type="PRINTS" id="PR00632">
    <property type="entry name" value="SONICHHOG"/>
</dbReference>
<dbReference type="SMART" id="SM00305">
    <property type="entry name" value="HintC"/>
    <property type="match status" value="1"/>
</dbReference>
<dbReference type="SMART" id="SM00306">
    <property type="entry name" value="HintN"/>
    <property type="match status" value="1"/>
</dbReference>
<dbReference type="SUPFAM" id="SSF55166">
    <property type="entry name" value="Hedgehog/DD-peptidase"/>
    <property type="match status" value="1"/>
</dbReference>
<dbReference type="SUPFAM" id="SSF51294">
    <property type="entry name" value="Hedgehog/intein (Hint) domain"/>
    <property type="match status" value="1"/>
</dbReference>
<accession>O43323</accession>
<accession>Q15794</accession>
<feature type="signal peptide" evidence="5">
    <location>
        <begin position="1"/>
        <end position="22"/>
    </location>
</feature>
<feature type="chain" id="PRO_0000013244" description="Desert hedgehog protein">
    <location>
        <begin position="23"/>
        <end position="396"/>
    </location>
</feature>
<feature type="chain" id="PRO_0000013245" description="Desert hedgehog protein N-product">
    <location>
        <begin position="23"/>
        <end position="198"/>
    </location>
</feature>
<feature type="binding site" evidence="9 10 19 21 22">
    <location>
        <position position="90"/>
    </location>
    <ligand>
        <name>Ca(2+)</name>
        <dbReference type="ChEBI" id="CHEBI:29108"/>
        <label>1</label>
    </ligand>
</feature>
<feature type="binding site" evidence="9 10 19 21 22">
    <location>
        <position position="91"/>
    </location>
    <ligand>
        <name>Ca(2+)</name>
        <dbReference type="ChEBI" id="CHEBI:29108"/>
        <label>1</label>
    </ligand>
</feature>
<feature type="binding site" evidence="9 10 19 21 22">
    <location>
        <position position="91"/>
    </location>
    <ligand>
        <name>Ca(2+)</name>
        <dbReference type="ChEBI" id="CHEBI:29108"/>
        <label>2</label>
    </ligand>
</feature>
<feature type="binding site" evidence="9 10 19 21 22">
    <location>
        <position position="96"/>
    </location>
    <ligand>
        <name>Ca(2+)</name>
        <dbReference type="ChEBI" id="CHEBI:29108"/>
        <label>1</label>
    </ligand>
</feature>
<feature type="binding site" evidence="9 10 19 21 22">
    <location>
        <position position="126"/>
    </location>
    <ligand>
        <name>Ca(2+)</name>
        <dbReference type="ChEBI" id="CHEBI:29108"/>
        <label>1</label>
    </ligand>
</feature>
<feature type="binding site" evidence="9 10 19 21 22">
    <location>
        <position position="127"/>
    </location>
    <ligand>
        <name>Ca(2+)</name>
        <dbReference type="ChEBI" id="CHEBI:29108"/>
        <label>1</label>
    </ligand>
</feature>
<feature type="binding site" evidence="9 10 19 21 22">
    <location>
        <position position="127"/>
    </location>
    <ligand>
        <name>Ca(2+)</name>
        <dbReference type="ChEBI" id="CHEBI:29108"/>
        <label>2</label>
    </ligand>
</feature>
<feature type="binding site" evidence="9 10 19 21 22">
    <location>
        <position position="130"/>
    </location>
    <ligand>
        <name>Ca(2+)</name>
        <dbReference type="ChEBI" id="CHEBI:29108"/>
        <label>2</label>
    </ligand>
</feature>
<feature type="binding site" evidence="9 10 19 21 22">
    <location>
        <position position="132"/>
    </location>
    <ligand>
        <name>Ca(2+)</name>
        <dbReference type="ChEBI" id="CHEBI:29108"/>
        <label>2</label>
    </ligand>
</feature>
<feature type="binding site" evidence="9 10 18 19 20 21 22">
    <location>
        <position position="141"/>
    </location>
    <ligand>
        <name>Zn(2+)</name>
        <dbReference type="ChEBI" id="CHEBI:29105"/>
    </ligand>
</feature>
<feature type="binding site" evidence="9 10 18 19 20 21 22">
    <location>
        <position position="148"/>
    </location>
    <ligand>
        <name>Zn(2+)</name>
        <dbReference type="ChEBI" id="CHEBI:29105"/>
    </ligand>
</feature>
<feature type="binding site" evidence="9 10 18 19 20 21 22">
    <location>
        <position position="183"/>
    </location>
    <ligand>
        <name>Zn(2+)</name>
        <dbReference type="ChEBI" id="CHEBI:29105"/>
    </ligand>
</feature>
<feature type="site" description="Cleavage; by autolysis" evidence="1">
    <location>
        <begin position="198"/>
        <end position="199"/>
    </location>
</feature>
<feature type="site" description="Involved in cholesterol transfer" evidence="1">
    <location>
        <position position="244"/>
    </location>
</feature>
<feature type="site" description="Involved in auto-cleavage" evidence="1">
    <location>
        <position position="268"/>
    </location>
</feature>
<feature type="site" description="Essential for auto-cleavage" evidence="1">
    <location>
        <position position="271"/>
    </location>
</feature>
<feature type="lipid moiety-binding region" description="N-palmitoyl cysteine" evidence="12">
    <location>
        <position position="23"/>
    </location>
</feature>
<feature type="lipid moiety-binding region" description="Cholesterol glycine ester" evidence="4">
    <location>
        <position position="198"/>
    </location>
</feature>
<feature type="sequence variant" id="VAR_054873" description="In SRXY7; dbSNP:rs111033589." evidence="8">
    <original>L</original>
    <variation>P</variation>
    <location>
        <position position="162"/>
    </location>
</feature>
<feature type="sequence variant" id="VAR_086512" description="In GDMN; uncertain significance." evidence="13">
    <location>
        <begin position="176"/>
        <end position="396"/>
    </location>
</feature>
<feature type="sequence variant" id="VAR_086513" description="In GDMN; uncertain significance; Reduces cleavage efficiency in in vitro time course; dbSNP:rs1480612338." evidence="13">
    <original>E</original>
    <variation>K</variation>
    <location>
        <position position="212"/>
    </location>
</feature>
<feature type="mutagenesis site" description="Loss of palmitoylation." evidence="12">
    <original>C</original>
    <variation>A</variation>
    <location>
        <position position="23"/>
    </location>
</feature>
<feature type="sequence conflict" description="In Ref. 3; AAB03398." evidence="16" ref="3">
    <original>E</original>
    <variation>G</variation>
    <location>
        <position position="177"/>
    </location>
</feature>
<feature type="strand" evidence="23">
    <location>
        <begin position="48"/>
        <end position="52"/>
    </location>
</feature>
<feature type="turn" evidence="23">
    <location>
        <begin position="57"/>
        <end position="60"/>
    </location>
</feature>
<feature type="helix" evidence="23">
    <location>
        <begin position="73"/>
        <end position="76"/>
    </location>
</feature>
<feature type="strand" evidence="23">
    <location>
        <begin position="85"/>
        <end position="87"/>
    </location>
</feature>
<feature type="strand" evidence="23">
    <location>
        <begin position="92"/>
        <end position="94"/>
    </location>
</feature>
<feature type="helix" evidence="23">
    <location>
        <begin position="95"/>
        <end position="97"/>
    </location>
</feature>
<feature type="helix" evidence="23">
    <location>
        <begin position="101"/>
        <end position="117"/>
    </location>
</feature>
<feature type="strand" evidence="23">
    <location>
        <begin position="123"/>
        <end position="127"/>
    </location>
</feature>
<feature type="helix" evidence="23">
    <location>
        <begin position="140"/>
        <end position="143"/>
    </location>
</feature>
<feature type="strand" evidence="23">
    <location>
        <begin position="146"/>
        <end position="151"/>
    </location>
</feature>
<feature type="helix" evidence="23">
    <location>
        <begin position="156"/>
        <end position="158"/>
    </location>
</feature>
<feature type="helix" evidence="23">
    <location>
        <begin position="159"/>
        <end position="168"/>
    </location>
</feature>
<feature type="strand" evidence="23">
    <location>
        <begin position="172"/>
        <end position="178"/>
    </location>
</feature>
<feature type="strand" evidence="23">
    <location>
        <begin position="181"/>
        <end position="185"/>
    </location>
</feature>
<feature type="helix" evidence="23">
    <location>
        <begin position="192"/>
        <end position="195"/>
    </location>
</feature>
<protein>
    <recommendedName>
        <fullName evidence="16">Desert hedgehog protein</fullName>
        <shortName>DHH</shortName>
        <ecNumber evidence="4">3.1.-.-</ecNumber>
    </recommendedName>
    <alternativeName>
        <fullName>HHG-3</fullName>
    </alternativeName>
    <component>
        <recommendedName>
            <fullName>Desert hedgehog protein N-product</fullName>
            <shortName evidence="15">DHH-N</shortName>
        </recommendedName>
    </component>
</protein>
<sequence>MALLTNLLPLCCLALLALPAQSCGPGRGPVGRRRYARKQLVPLLYKQFVPGVPERTLGASGPAEGRVARGSERFRDLVPNYNPDIIFKDEENSGADRLMTERCKERVNALAIAVMNMWPGVRLRVTEGWDEDGHHAQDSLHYEGRALDITTSDRDRNKYGLLARLAVEAGFDWVYYESRNHVHVSVKADNSLAVRAGGCFPGNATVRLWSGERKGLRELHRGDWVLAADASGRVVPTPVLLFLDRDLQRRASFVAVETEWPPRKLLLTPWHLVFAARGPAPAPGDFAPVFARRLRAGDSVLAPGGDALRPARVARVAREEAVGVFAPLTAHGTLLVNDVLASCYAVLESHQWAHRAFAPLRLLHALGALLPGGAVQPTGMHWYSRLLYRLAEELLG</sequence>